<keyword id="KW-0256">Endoplasmic reticulum</keyword>
<keyword id="KW-0444">Lipid biosynthesis</keyword>
<keyword id="KW-0443">Lipid metabolism</keyword>
<keyword id="KW-0472">Membrane</keyword>
<keyword id="KW-0489">Methyltransferase</keyword>
<keyword id="KW-0594">Phospholipid biosynthesis</keyword>
<keyword id="KW-1208">Phospholipid metabolism</keyword>
<keyword id="KW-0949">S-adenosyl-L-methionine</keyword>
<keyword id="KW-0808">Transferase</keyword>
<keyword id="KW-0812">Transmembrane</keyword>
<keyword id="KW-1133">Transmembrane helix</keyword>
<feature type="chain" id="PRO_0000405869" description="Phosphatidylethanolamine N-methyltransferase">
    <location>
        <begin position="1"/>
        <end position="977"/>
    </location>
</feature>
<feature type="topological domain" description="Lumenal" evidence="1">
    <location>
        <begin position="1"/>
        <end position="88"/>
    </location>
</feature>
<feature type="transmembrane region" description="Helical" evidence="1">
    <location>
        <begin position="89"/>
        <end position="109"/>
    </location>
</feature>
<feature type="topological domain" description="Cytoplasmic" evidence="1">
    <location>
        <begin position="110"/>
        <end position="112"/>
    </location>
</feature>
<feature type="transmembrane region" description="Helical" evidence="1">
    <location>
        <begin position="113"/>
        <end position="133"/>
    </location>
</feature>
<feature type="topological domain" description="Lumenal" evidence="1">
    <location>
        <begin position="134"/>
        <end position="198"/>
    </location>
</feature>
<feature type="transmembrane region" description="Helical" evidence="1">
    <location>
        <begin position="199"/>
        <end position="219"/>
    </location>
</feature>
<feature type="topological domain" description="Cytoplasmic" evidence="1">
    <location>
        <begin position="220"/>
        <end position="226"/>
    </location>
</feature>
<feature type="transmembrane region" description="Helical" evidence="1">
    <location>
        <begin position="227"/>
        <end position="247"/>
    </location>
</feature>
<feature type="topological domain" description="Lumenal" evidence="1">
    <location>
        <begin position="248"/>
        <end position="280"/>
    </location>
</feature>
<feature type="transmembrane region" description="Helical" evidence="1">
    <location>
        <begin position="281"/>
        <end position="301"/>
    </location>
</feature>
<feature type="topological domain" description="Cytoplasmic" evidence="1">
    <location>
        <begin position="302"/>
        <end position="303"/>
    </location>
</feature>
<feature type="transmembrane region" description="Helical" evidence="1">
    <location>
        <begin position="304"/>
        <end position="324"/>
    </location>
</feature>
<feature type="topological domain" description="Lumenal" evidence="1">
    <location>
        <begin position="325"/>
        <end position="397"/>
    </location>
</feature>
<feature type="transmembrane region" description="Helical" evidence="1">
    <location>
        <begin position="398"/>
        <end position="418"/>
    </location>
</feature>
<feature type="topological domain" description="Cytoplasmic" evidence="1">
    <location>
        <position position="419"/>
    </location>
</feature>
<feature type="transmembrane region" description="Helical" evidence="1">
    <location>
        <begin position="420"/>
        <end position="440"/>
    </location>
</feature>
<feature type="topological domain" description="Lumenal" evidence="1">
    <location>
        <begin position="441"/>
        <end position="471"/>
    </location>
</feature>
<feature type="transmembrane region" description="Helical" evidence="1">
    <location>
        <begin position="472"/>
        <end position="488"/>
    </location>
</feature>
<feature type="topological domain" description="Cytoplasmic" evidence="1">
    <location>
        <begin position="489"/>
        <end position="498"/>
    </location>
</feature>
<feature type="transmembrane region" description="Helical" evidence="1">
    <location>
        <begin position="499"/>
        <end position="519"/>
    </location>
</feature>
<feature type="topological domain" description="Lumenal" evidence="1">
    <location>
        <begin position="520"/>
        <end position="562"/>
    </location>
</feature>
<feature type="transmembrane region" description="Helical" evidence="1">
    <location>
        <begin position="563"/>
        <end position="583"/>
    </location>
</feature>
<feature type="topological domain" description="Cytoplasmic" evidence="1">
    <location>
        <begin position="584"/>
        <end position="977"/>
    </location>
</feature>
<feature type="region of interest" description="Disordered" evidence="2">
    <location>
        <begin position="1"/>
        <end position="62"/>
    </location>
</feature>
<feature type="region of interest" description="Disordered" evidence="2">
    <location>
        <begin position="334"/>
        <end position="366"/>
    </location>
</feature>
<feature type="region of interest" description="Disordered" evidence="2">
    <location>
        <begin position="703"/>
        <end position="724"/>
    </location>
</feature>
<feature type="compositionally biased region" description="Polar residues" evidence="2">
    <location>
        <begin position="1"/>
        <end position="15"/>
    </location>
</feature>
<feature type="compositionally biased region" description="Basic and acidic residues" evidence="2">
    <location>
        <begin position="28"/>
        <end position="55"/>
    </location>
</feature>
<feature type="compositionally biased region" description="Basic and acidic residues" evidence="2">
    <location>
        <begin position="341"/>
        <end position="356"/>
    </location>
</feature>
<feature type="compositionally biased region" description="Basic and acidic residues" evidence="2">
    <location>
        <begin position="712"/>
        <end position="724"/>
    </location>
</feature>
<comment type="function">
    <text evidence="1">Catalyzes the first step of the methylation pathway of phosphatidylcholine biosynthesis, the SAM-dependent methylation of phosphatidylethanolamine (PE) to phosphatidylmonomethylethanolamine (PMME).</text>
</comment>
<comment type="catalytic activity">
    <reaction evidence="1">
        <text>a 1,2-diacyl-sn-glycero-3-phosphoethanolamine + S-adenosyl-L-methionine = a 1,2-diacyl-sn-glycero-3-phospho-N-methylethanolamine + S-adenosyl-L-homocysteine + H(+)</text>
        <dbReference type="Rhea" id="RHEA:11164"/>
        <dbReference type="ChEBI" id="CHEBI:15378"/>
        <dbReference type="ChEBI" id="CHEBI:57856"/>
        <dbReference type="ChEBI" id="CHEBI:59789"/>
        <dbReference type="ChEBI" id="CHEBI:64573"/>
        <dbReference type="ChEBI" id="CHEBI:64612"/>
        <dbReference type="EC" id="2.1.1.17"/>
    </reaction>
</comment>
<comment type="pathway">
    <text evidence="1">Phospholipid metabolism; phosphatidylcholine biosynthesis.</text>
</comment>
<comment type="subcellular location">
    <subcellularLocation>
        <location evidence="1">Endoplasmic reticulum membrane</location>
        <topology evidence="1">Multi-pass membrane protein</topology>
    </subcellularLocation>
</comment>
<comment type="similarity">
    <text evidence="1">Belongs to the class VI-like SAM-binding methyltransferase superfamily. CHO2 family.</text>
</comment>
<name>CHO2_AJEDR</name>
<gene>
    <name type="primary">CHO2</name>
    <name type="ORF">BDCG_06178</name>
</gene>
<dbReference type="EC" id="2.1.1.17" evidence="1"/>
<dbReference type="EMBL" id="EQ999978">
    <property type="protein sequence ID" value="EEQ91058.1"/>
    <property type="molecule type" value="Genomic_DNA"/>
</dbReference>
<dbReference type="SMR" id="C5GN10"/>
<dbReference type="STRING" id="559297.C5GN10"/>
<dbReference type="VEuPathDB" id="FungiDB:BDCG_06178"/>
<dbReference type="eggNOG" id="ENOG502QRGH">
    <property type="taxonomic scope" value="Eukaryota"/>
</dbReference>
<dbReference type="HOGENOM" id="CLU_005987_0_0_1"/>
<dbReference type="OMA" id="RIWYSVG"/>
<dbReference type="UniPathway" id="UPA00753"/>
<dbReference type="GO" id="GO:0032541">
    <property type="term" value="C:cortical endoplasmic reticulum"/>
    <property type="evidence" value="ECO:0007669"/>
    <property type="project" value="EnsemblFungi"/>
</dbReference>
<dbReference type="GO" id="GO:0005789">
    <property type="term" value="C:endoplasmic reticulum membrane"/>
    <property type="evidence" value="ECO:0007669"/>
    <property type="project" value="UniProtKB-SubCell"/>
</dbReference>
<dbReference type="GO" id="GO:0097038">
    <property type="term" value="C:perinuclear endoplasmic reticulum"/>
    <property type="evidence" value="ECO:0007669"/>
    <property type="project" value="EnsemblFungi"/>
</dbReference>
<dbReference type="GO" id="GO:0004608">
    <property type="term" value="F:phosphatidylethanolamine N-methyltransferase activity"/>
    <property type="evidence" value="ECO:0007669"/>
    <property type="project" value="UniProtKB-UniRule"/>
</dbReference>
<dbReference type="GO" id="GO:0032259">
    <property type="term" value="P:methylation"/>
    <property type="evidence" value="ECO:0007669"/>
    <property type="project" value="UniProtKB-KW"/>
</dbReference>
<dbReference type="GO" id="GO:0006656">
    <property type="term" value="P:phosphatidylcholine biosynthetic process"/>
    <property type="evidence" value="ECO:0007669"/>
    <property type="project" value="UniProtKB-UniRule"/>
</dbReference>
<dbReference type="FunFam" id="2.60.40.2840:FF:000006">
    <property type="entry name" value="Phosphatidylethanolamine N-methyltransferase"/>
    <property type="match status" value="1"/>
</dbReference>
<dbReference type="Gene3D" id="2.60.40.2840">
    <property type="match status" value="1"/>
</dbReference>
<dbReference type="HAMAP" id="MF_03217">
    <property type="entry name" value="PEMT"/>
    <property type="match status" value="1"/>
</dbReference>
<dbReference type="InterPro" id="IPR007318">
    <property type="entry name" value="Phopholipid_MeTrfase"/>
</dbReference>
<dbReference type="InterPro" id="IPR016219">
    <property type="entry name" value="Phosphatid-EA_MeTrfase_fun"/>
</dbReference>
<dbReference type="PANTHER" id="PTHR32138">
    <property type="entry name" value="PHOSPHATIDYLETHANOLAMINE N-METHYLTRANSFERASE"/>
    <property type="match status" value="1"/>
</dbReference>
<dbReference type="PANTHER" id="PTHR32138:SF0">
    <property type="entry name" value="PHOSPHATIDYLETHANOLAMINE N-METHYLTRANSFERASE"/>
    <property type="match status" value="1"/>
</dbReference>
<dbReference type="Pfam" id="PF04191">
    <property type="entry name" value="PEMT"/>
    <property type="match status" value="2"/>
</dbReference>
<dbReference type="PIRSF" id="PIRSF000383">
    <property type="entry name" value="PEAMT"/>
    <property type="match status" value="1"/>
</dbReference>
<dbReference type="PROSITE" id="PS51598">
    <property type="entry name" value="SAM_CHO2"/>
    <property type="match status" value="1"/>
</dbReference>
<reference key="1">
    <citation type="journal article" date="2015" name="PLoS Genet.">
        <title>The dynamic genome and transcriptome of the human fungal pathogen Blastomyces and close relative Emmonsia.</title>
        <authorList>
            <person name="Munoz J.F."/>
            <person name="Gauthier G.M."/>
            <person name="Desjardins C.A."/>
            <person name="Gallo J.E."/>
            <person name="Holder J."/>
            <person name="Sullivan T.D."/>
            <person name="Marty A.J."/>
            <person name="Carmen J.C."/>
            <person name="Chen Z."/>
            <person name="Ding L."/>
            <person name="Gujja S."/>
            <person name="Magrini V."/>
            <person name="Misas E."/>
            <person name="Mitreva M."/>
            <person name="Priest M."/>
            <person name="Saif S."/>
            <person name="Whiston E.A."/>
            <person name="Young S."/>
            <person name="Zeng Q."/>
            <person name="Goldman W.E."/>
            <person name="Mardis E.R."/>
            <person name="Taylor J.W."/>
            <person name="McEwen J.G."/>
            <person name="Clay O.K."/>
            <person name="Klein B.S."/>
            <person name="Cuomo C.A."/>
        </authorList>
    </citation>
    <scope>NUCLEOTIDE SEQUENCE [LARGE SCALE GENOMIC DNA]</scope>
    <source>
        <strain>ER-3 / ATCC MYA-2586</strain>
    </source>
</reference>
<protein>
    <recommendedName>
        <fullName evidence="1">Phosphatidylethanolamine N-methyltransferase</fullName>
        <shortName evidence="1">PE methyltransferase</shortName>
        <shortName evidence="1">PEAMT</shortName>
        <shortName evidence="1">PEMT</shortName>
        <ecNumber evidence="1">2.1.1.17</ecNumber>
    </recommendedName>
</protein>
<organism>
    <name type="scientific">Ajellomyces dermatitidis (strain ER-3 / ATCC MYA-2586)</name>
    <name type="common">Blastomyces dermatitidis</name>
    <dbReference type="NCBI Taxonomy" id="559297"/>
    <lineage>
        <taxon>Eukaryota</taxon>
        <taxon>Fungi</taxon>
        <taxon>Dikarya</taxon>
        <taxon>Ascomycota</taxon>
        <taxon>Pezizomycotina</taxon>
        <taxon>Eurotiomycetes</taxon>
        <taxon>Eurotiomycetidae</taxon>
        <taxon>Onygenales</taxon>
        <taxon>Ajellomycetaceae</taxon>
        <taxon>Blastomyces</taxon>
    </lineage>
</organism>
<proteinExistence type="inferred from homology"/>
<sequence length="977" mass="110820">MSEQATSSGLESRSNGLRERNLQASKSAADRDVASQSLEDKLQVEEGEADTEKKTFGRTPDGTVFTVPPTRDMVSQLLSPSEPKNISDIFVLAILGCHILLLWFLPSSFRVAAFAVIFLFWRASYNIGIGWLLHMQSNGRTLVCWAKKSNIFVNPSTGQNPHPTLYKLLKWELETKISEQYSFEEAPTEYNTWLVFRRVVDLILMCDFTSYCLFAIACGGRPTGESFIMLALRWITGMSLVLFNLWVKLDAHRVVKDFAWYWGDFFYLIDQDLTFDGVFEMAPHPMYSVGYAGYYGISLMAASYKILFISILAHAAQFAFLVLVENPHIEKTYNAPPPRKRVADTDTKPQEDENSHEGSVVSDTLSSAPVIPPLQPSSMHSLLGLHNIDLYRSTDQSVLLAQVLFFALTTLTPSTPVYQFCFVLNAALWRIWYSVGIGYILNRQSNCKMWTRHFVKYGESNHEAWRQWKGTYHLSMTMTYASFIAAAWKMYSFPQDWRYGLVLLRHILGASLIALQIWTSTSIYESLGEFGWFFGDFFFDEFPKLTYSGIYRFLNNPERVLGLAGVWGAVLITSTKSVVFLALLSHTLTLAFIQLVERPHMQKLYGQSLRRDAGLVRSLKRSLPPSLKQIHGSVDKILDDSFEFIEEFIEAARPKLAAGVQTFVKDTSALFQKYPARVTISRLEPDLAGYDLKDYSITLEGTQPSRPAQFERASDKEGERARSMPYRRGEQENLMFEYGAPIKVKWTAPLNHSKKDWVGLYMVTDNTSREVTRVSSQGRWIATNQASFDSETCEQGLISSDIVLKSSRDDGEPRDVASGEMVFSGDKLWWTQGVFEFRYHHNGKHNVMAVSRPFEICIGRFDEDDIEVDNYGLVRAAVEAALLPVVQNCFDRDPEIAPQTVEEHYGCLVDRDGKYSKRVVFAVHHMFGIEFAPEVVRADGNIRNLAWRICNAKKVLAPYSMSRSNGASTPTAAHEED</sequence>
<accession>C5GN10</accession>
<evidence type="ECO:0000255" key="1">
    <source>
        <dbReference type="HAMAP-Rule" id="MF_03217"/>
    </source>
</evidence>
<evidence type="ECO:0000256" key="2">
    <source>
        <dbReference type="SAM" id="MobiDB-lite"/>
    </source>
</evidence>